<name>RS18_MICAN</name>
<accession>B0JVN4</accession>
<proteinExistence type="inferred from homology"/>
<protein>
    <recommendedName>
        <fullName evidence="1">Small ribosomal subunit protein bS18</fullName>
    </recommendedName>
    <alternativeName>
        <fullName evidence="2">30S ribosomal protein S18</fullName>
    </alternativeName>
</protein>
<evidence type="ECO:0000255" key="1">
    <source>
        <dbReference type="HAMAP-Rule" id="MF_00270"/>
    </source>
</evidence>
<evidence type="ECO:0000305" key="2"/>
<reference key="1">
    <citation type="journal article" date="2007" name="DNA Res.">
        <title>Complete genomic structure of the bloom-forming toxic cyanobacterium Microcystis aeruginosa NIES-843.</title>
        <authorList>
            <person name="Kaneko T."/>
            <person name="Nakajima N."/>
            <person name="Okamoto S."/>
            <person name="Suzuki I."/>
            <person name="Tanabe Y."/>
            <person name="Tamaoki M."/>
            <person name="Nakamura Y."/>
            <person name="Kasai F."/>
            <person name="Watanabe A."/>
            <person name="Kawashima K."/>
            <person name="Kishida Y."/>
            <person name="Ono A."/>
            <person name="Shimizu Y."/>
            <person name="Takahashi C."/>
            <person name="Minami C."/>
            <person name="Fujishiro T."/>
            <person name="Kohara M."/>
            <person name="Katoh M."/>
            <person name="Nakazaki N."/>
            <person name="Nakayama S."/>
            <person name="Yamada M."/>
            <person name="Tabata S."/>
            <person name="Watanabe M.M."/>
        </authorList>
    </citation>
    <scope>NUCLEOTIDE SEQUENCE [LARGE SCALE GENOMIC DNA]</scope>
    <source>
        <strain>NIES-843 / IAM M-247</strain>
    </source>
</reference>
<dbReference type="EMBL" id="AP009552">
    <property type="protein sequence ID" value="BAG04627.1"/>
    <property type="molecule type" value="Genomic_DNA"/>
</dbReference>
<dbReference type="RefSeq" id="WP_002770735.1">
    <property type="nucleotide sequence ID" value="NC_010296.1"/>
</dbReference>
<dbReference type="SMR" id="B0JVN4"/>
<dbReference type="STRING" id="449447.MAE_48050"/>
<dbReference type="PaxDb" id="449447-MAE_48050"/>
<dbReference type="EnsemblBacteria" id="BAG04627">
    <property type="protein sequence ID" value="BAG04627"/>
    <property type="gene ID" value="MAE_48050"/>
</dbReference>
<dbReference type="GeneID" id="66705894"/>
<dbReference type="KEGG" id="mar:MAE_48050"/>
<dbReference type="eggNOG" id="COG0238">
    <property type="taxonomic scope" value="Bacteria"/>
</dbReference>
<dbReference type="HOGENOM" id="CLU_148710_2_3_3"/>
<dbReference type="BioCyc" id="MAER449447:MAE_RS20865-MONOMER"/>
<dbReference type="Proteomes" id="UP000001510">
    <property type="component" value="Chromosome"/>
</dbReference>
<dbReference type="GO" id="GO:0022627">
    <property type="term" value="C:cytosolic small ribosomal subunit"/>
    <property type="evidence" value="ECO:0007669"/>
    <property type="project" value="TreeGrafter"/>
</dbReference>
<dbReference type="GO" id="GO:0070181">
    <property type="term" value="F:small ribosomal subunit rRNA binding"/>
    <property type="evidence" value="ECO:0007669"/>
    <property type="project" value="TreeGrafter"/>
</dbReference>
<dbReference type="GO" id="GO:0003735">
    <property type="term" value="F:structural constituent of ribosome"/>
    <property type="evidence" value="ECO:0007669"/>
    <property type="project" value="InterPro"/>
</dbReference>
<dbReference type="GO" id="GO:0006412">
    <property type="term" value="P:translation"/>
    <property type="evidence" value="ECO:0007669"/>
    <property type="project" value="UniProtKB-UniRule"/>
</dbReference>
<dbReference type="FunFam" id="4.10.640.10:FF:000002">
    <property type="entry name" value="30S ribosomal protein S18, chloroplastic"/>
    <property type="match status" value="1"/>
</dbReference>
<dbReference type="Gene3D" id="4.10.640.10">
    <property type="entry name" value="Ribosomal protein S18"/>
    <property type="match status" value="1"/>
</dbReference>
<dbReference type="HAMAP" id="MF_00270">
    <property type="entry name" value="Ribosomal_bS18"/>
    <property type="match status" value="1"/>
</dbReference>
<dbReference type="InterPro" id="IPR001648">
    <property type="entry name" value="Ribosomal_bS18"/>
</dbReference>
<dbReference type="InterPro" id="IPR018275">
    <property type="entry name" value="Ribosomal_bS18_CS"/>
</dbReference>
<dbReference type="InterPro" id="IPR036870">
    <property type="entry name" value="Ribosomal_bS18_sf"/>
</dbReference>
<dbReference type="NCBIfam" id="TIGR00165">
    <property type="entry name" value="S18"/>
    <property type="match status" value="1"/>
</dbReference>
<dbReference type="PANTHER" id="PTHR13479">
    <property type="entry name" value="30S RIBOSOMAL PROTEIN S18"/>
    <property type="match status" value="1"/>
</dbReference>
<dbReference type="PANTHER" id="PTHR13479:SF40">
    <property type="entry name" value="SMALL RIBOSOMAL SUBUNIT PROTEIN BS18M"/>
    <property type="match status" value="1"/>
</dbReference>
<dbReference type="Pfam" id="PF01084">
    <property type="entry name" value="Ribosomal_S18"/>
    <property type="match status" value="1"/>
</dbReference>
<dbReference type="PRINTS" id="PR00974">
    <property type="entry name" value="RIBOSOMALS18"/>
</dbReference>
<dbReference type="SUPFAM" id="SSF46911">
    <property type="entry name" value="Ribosomal protein S18"/>
    <property type="match status" value="1"/>
</dbReference>
<dbReference type="PROSITE" id="PS00057">
    <property type="entry name" value="RIBOSOMAL_S18"/>
    <property type="match status" value="1"/>
</dbReference>
<gene>
    <name evidence="1" type="primary">rpsR</name>
    <name evidence="1" type="synonym">rps18</name>
    <name type="ordered locus">MAE_48050</name>
</gene>
<sequence length="71" mass="8335">MSYYRKRLSPISPSQPIDYKDTELLRKFITERGKILPRRITGLTSKQQRDLTEAVKRARLMALLPFVNQEA</sequence>
<organism>
    <name type="scientific">Microcystis aeruginosa (strain NIES-843 / IAM M-2473)</name>
    <dbReference type="NCBI Taxonomy" id="449447"/>
    <lineage>
        <taxon>Bacteria</taxon>
        <taxon>Bacillati</taxon>
        <taxon>Cyanobacteriota</taxon>
        <taxon>Cyanophyceae</taxon>
        <taxon>Oscillatoriophycideae</taxon>
        <taxon>Chroococcales</taxon>
        <taxon>Microcystaceae</taxon>
        <taxon>Microcystis</taxon>
    </lineage>
</organism>
<keyword id="KW-0687">Ribonucleoprotein</keyword>
<keyword id="KW-0689">Ribosomal protein</keyword>
<keyword id="KW-0694">RNA-binding</keyword>
<keyword id="KW-0699">rRNA-binding</keyword>
<comment type="function">
    <text evidence="1">Binds as a heterodimer with protein bS6 to the central domain of the 16S rRNA, where it helps stabilize the platform of the 30S subunit.</text>
</comment>
<comment type="subunit">
    <text evidence="1">Part of the 30S ribosomal subunit. Forms a tight heterodimer with protein bS6.</text>
</comment>
<comment type="similarity">
    <text evidence="1">Belongs to the bacterial ribosomal protein bS18 family.</text>
</comment>
<feature type="chain" id="PRO_1000078705" description="Small ribosomal subunit protein bS18">
    <location>
        <begin position="1"/>
        <end position="71"/>
    </location>
</feature>